<proteinExistence type="inferred from homology"/>
<gene>
    <name evidence="1" type="primary">htpG</name>
    <name type="ordered locus">XOO2510</name>
</gene>
<reference key="1">
    <citation type="journal article" date="2005" name="Nucleic Acids Res.">
        <title>The genome sequence of Xanthomonas oryzae pathovar oryzae KACC10331, the bacterial blight pathogen of rice.</title>
        <authorList>
            <person name="Lee B.-M."/>
            <person name="Park Y.-J."/>
            <person name="Park D.-S."/>
            <person name="Kang H.-W."/>
            <person name="Kim J.-G."/>
            <person name="Song E.-S."/>
            <person name="Park I.-C."/>
            <person name="Yoon U.-H."/>
            <person name="Hahn J.-H."/>
            <person name="Koo B.-S."/>
            <person name="Lee G.-B."/>
            <person name="Kim H."/>
            <person name="Park H.-S."/>
            <person name="Yoon K.-O."/>
            <person name="Kim J.-H."/>
            <person name="Jung C.-H."/>
            <person name="Koh N.-H."/>
            <person name="Seo J.-S."/>
            <person name="Go S.-J."/>
        </authorList>
    </citation>
    <scope>NUCLEOTIDE SEQUENCE [LARGE SCALE GENOMIC DNA]</scope>
    <source>
        <strain>KACC10331 / KXO85</strain>
    </source>
</reference>
<accession>Q5GZV7</accession>
<organism>
    <name type="scientific">Xanthomonas oryzae pv. oryzae (strain KACC10331 / KXO85)</name>
    <dbReference type="NCBI Taxonomy" id="291331"/>
    <lineage>
        <taxon>Bacteria</taxon>
        <taxon>Pseudomonadati</taxon>
        <taxon>Pseudomonadota</taxon>
        <taxon>Gammaproteobacteria</taxon>
        <taxon>Lysobacterales</taxon>
        <taxon>Lysobacteraceae</taxon>
        <taxon>Xanthomonas</taxon>
    </lineage>
</organism>
<comment type="function">
    <text evidence="1">Molecular chaperone. Has ATPase activity.</text>
</comment>
<comment type="subunit">
    <text evidence="1">Homodimer.</text>
</comment>
<comment type="subcellular location">
    <subcellularLocation>
        <location evidence="1">Cytoplasm</location>
    </subcellularLocation>
</comment>
<comment type="similarity">
    <text evidence="1">Belongs to the heat shock protein 90 family.</text>
</comment>
<comment type="sequence caution" evidence="2">
    <conflict type="erroneous initiation">
        <sequence resource="EMBL-CDS" id="AAW75764"/>
    </conflict>
</comment>
<name>HTPG_XANOR</name>
<dbReference type="EMBL" id="AE013598">
    <property type="protein sequence ID" value="AAW75764.1"/>
    <property type="status" value="ALT_INIT"/>
    <property type="molecule type" value="Genomic_DNA"/>
</dbReference>
<dbReference type="SMR" id="Q5GZV7"/>
<dbReference type="STRING" id="291331.XOO2510"/>
<dbReference type="KEGG" id="xoo:XOO2510"/>
<dbReference type="HOGENOM" id="CLU_006684_3_0_6"/>
<dbReference type="Proteomes" id="UP000006735">
    <property type="component" value="Chromosome"/>
</dbReference>
<dbReference type="GO" id="GO:0005737">
    <property type="term" value="C:cytoplasm"/>
    <property type="evidence" value="ECO:0007669"/>
    <property type="project" value="UniProtKB-SubCell"/>
</dbReference>
<dbReference type="GO" id="GO:0005524">
    <property type="term" value="F:ATP binding"/>
    <property type="evidence" value="ECO:0007669"/>
    <property type="project" value="UniProtKB-UniRule"/>
</dbReference>
<dbReference type="GO" id="GO:0016887">
    <property type="term" value="F:ATP hydrolysis activity"/>
    <property type="evidence" value="ECO:0007669"/>
    <property type="project" value="InterPro"/>
</dbReference>
<dbReference type="GO" id="GO:0140662">
    <property type="term" value="F:ATP-dependent protein folding chaperone"/>
    <property type="evidence" value="ECO:0007669"/>
    <property type="project" value="InterPro"/>
</dbReference>
<dbReference type="GO" id="GO:0051082">
    <property type="term" value="F:unfolded protein binding"/>
    <property type="evidence" value="ECO:0007669"/>
    <property type="project" value="UniProtKB-UniRule"/>
</dbReference>
<dbReference type="CDD" id="cd16927">
    <property type="entry name" value="HATPase_Hsp90-like"/>
    <property type="match status" value="1"/>
</dbReference>
<dbReference type="FunFam" id="1.20.120.790:FF:000008">
    <property type="entry name" value="Chaperone protein HtpG"/>
    <property type="match status" value="1"/>
</dbReference>
<dbReference type="FunFam" id="3.30.230.80:FF:000002">
    <property type="entry name" value="Molecular chaperone HtpG"/>
    <property type="match status" value="1"/>
</dbReference>
<dbReference type="FunFam" id="3.30.565.10:FF:000009">
    <property type="entry name" value="Molecular chaperone HtpG"/>
    <property type="match status" value="1"/>
</dbReference>
<dbReference type="Gene3D" id="3.30.230.80">
    <property type="match status" value="1"/>
</dbReference>
<dbReference type="Gene3D" id="3.40.50.11260">
    <property type="match status" value="1"/>
</dbReference>
<dbReference type="Gene3D" id="1.20.120.790">
    <property type="entry name" value="Heat shock protein 90, C-terminal domain"/>
    <property type="match status" value="1"/>
</dbReference>
<dbReference type="Gene3D" id="3.30.565.10">
    <property type="entry name" value="Histidine kinase-like ATPase, C-terminal domain"/>
    <property type="match status" value="1"/>
</dbReference>
<dbReference type="HAMAP" id="MF_00505">
    <property type="entry name" value="HSP90"/>
    <property type="match status" value="1"/>
</dbReference>
<dbReference type="InterPro" id="IPR036890">
    <property type="entry name" value="HATPase_C_sf"/>
</dbReference>
<dbReference type="InterPro" id="IPR019805">
    <property type="entry name" value="Heat_shock_protein_90_CS"/>
</dbReference>
<dbReference type="InterPro" id="IPR037196">
    <property type="entry name" value="HSP90_C"/>
</dbReference>
<dbReference type="InterPro" id="IPR001404">
    <property type="entry name" value="Hsp90_fam"/>
</dbReference>
<dbReference type="InterPro" id="IPR020575">
    <property type="entry name" value="Hsp90_N"/>
</dbReference>
<dbReference type="InterPro" id="IPR020568">
    <property type="entry name" value="Ribosomal_Su5_D2-typ_SF"/>
</dbReference>
<dbReference type="NCBIfam" id="NF003555">
    <property type="entry name" value="PRK05218.1"/>
    <property type="match status" value="1"/>
</dbReference>
<dbReference type="PANTHER" id="PTHR11528">
    <property type="entry name" value="HEAT SHOCK PROTEIN 90 FAMILY MEMBER"/>
    <property type="match status" value="1"/>
</dbReference>
<dbReference type="Pfam" id="PF13589">
    <property type="entry name" value="HATPase_c_3"/>
    <property type="match status" value="1"/>
</dbReference>
<dbReference type="Pfam" id="PF00183">
    <property type="entry name" value="HSP90"/>
    <property type="match status" value="1"/>
</dbReference>
<dbReference type="PIRSF" id="PIRSF002583">
    <property type="entry name" value="Hsp90"/>
    <property type="match status" value="1"/>
</dbReference>
<dbReference type="PRINTS" id="PR00775">
    <property type="entry name" value="HEATSHOCK90"/>
</dbReference>
<dbReference type="SMART" id="SM00387">
    <property type="entry name" value="HATPase_c"/>
    <property type="match status" value="1"/>
</dbReference>
<dbReference type="SUPFAM" id="SSF55874">
    <property type="entry name" value="ATPase domain of HSP90 chaperone/DNA topoisomerase II/histidine kinase"/>
    <property type="match status" value="1"/>
</dbReference>
<dbReference type="SUPFAM" id="SSF110942">
    <property type="entry name" value="HSP90 C-terminal domain"/>
    <property type="match status" value="1"/>
</dbReference>
<dbReference type="SUPFAM" id="SSF54211">
    <property type="entry name" value="Ribosomal protein S5 domain 2-like"/>
    <property type="match status" value="1"/>
</dbReference>
<dbReference type="PROSITE" id="PS00298">
    <property type="entry name" value="HSP90"/>
    <property type="match status" value="1"/>
</dbReference>
<sequence>MTVDTDKQTLGFQTEVKQLLQLMIHSLYSNKEIFLRELVSNAADAADKLRFEALVKPELLEGSGELRIRVDYDKDARTVTIDDNGIGMSREDAVSHLGTIAKSGTADFLKHLSGDQKKDANLIGQFGVGFYSAFIVADQVDVYSRRAGLPAREGVHWSSRGEGEFEVASVDKPERGTRIVLHLKDGEDTFADGWTLRGILKKYSDHIGLPIEMRKEHYGEAADKPAEPEWEAVNRASALWTRPKSEIKDEEYQEFYKHIAHDAGNPLAWSHNKVEGKLEYTSLLFVPGRAPFDLYHRDSAKGLKLYVQRVFIMDQAEQFLPLYLRFIKGVVDSSDLSLNVSREILQSGPVVDSMKSALTKRSLDMLEKLAKDKPDDYATFWRNFGQALKEGPAEDYANREKIAGLMRFSSTHDTTGAQSVGLADYVSRLAEGQDKLYYLTGESYAQIKDSPHLEVFRKKGIEVLLLTDRIDEWLMSYLTEFDGKSFVDVARGDLDLGKLDSEEDKKAQEEVAKSKEGLASRIKAALGEDVAEVRVSHRLTDSPAILAIGQGDLGLQMRQLLEASGQAVPESKPVFEFNPTHPLIEKLDAEQDMDRFCDLSQVLFDQAALAAGDSLKDPAGYVKRLNKLLLELSV</sequence>
<protein>
    <recommendedName>
        <fullName evidence="1">Chaperone protein HtpG</fullName>
    </recommendedName>
    <alternativeName>
        <fullName evidence="1">Heat shock protein HtpG</fullName>
    </alternativeName>
    <alternativeName>
        <fullName evidence="1">High temperature protein G</fullName>
    </alternativeName>
</protein>
<keyword id="KW-0067">ATP-binding</keyword>
<keyword id="KW-0143">Chaperone</keyword>
<keyword id="KW-0963">Cytoplasm</keyword>
<keyword id="KW-0547">Nucleotide-binding</keyword>
<keyword id="KW-1185">Reference proteome</keyword>
<keyword id="KW-0346">Stress response</keyword>
<feature type="chain" id="PRO_0000224239" description="Chaperone protein HtpG">
    <location>
        <begin position="1"/>
        <end position="634"/>
    </location>
</feature>
<feature type="region of interest" description="A; substrate-binding" evidence="1">
    <location>
        <begin position="1"/>
        <end position="342"/>
    </location>
</feature>
<feature type="region of interest" description="B" evidence="1">
    <location>
        <begin position="343"/>
        <end position="559"/>
    </location>
</feature>
<feature type="region of interest" description="C" evidence="1">
    <location>
        <begin position="560"/>
        <end position="634"/>
    </location>
</feature>
<evidence type="ECO:0000255" key="1">
    <source>
        <dbReference type="HAMAP-Rule" id="MF_00505"/>
    </source>
</evidence>
<evidence type="ECO:0000305" key="2"/>